<sequence length="181" mass="21443">MKFLFDYFPIICFFVAYKFWGIYIATAAAMVVSALQVAIYWIRFRRFEKFHVITLIFILLLGSFTLVFHNAIFIKWKPTIVYWIFAIVLFGSHFFGKHTLVHRMLKEKIELPAKTWSRLNLSWALFFLILGVLNLFVVYNFDTNTWVNFKLFGTLALMLVFILGQAFYIARHAQNLKTNSR</sequence>
<gene>
    <name evidence="1" type="primary">yciB</name>
    <name type="ordered locus">CbuK_0771</name>
</gene>
<evidence type="ECO:0000255" key="1">
    <source>
        <dbReference type="HAMAP-Rule" id="MF_00189"/>
    </source>
</evidence>
<protein>
    <recommendedName>
        <fullName evidence="1">Inner membrane-spanning protein YciB</fullName>
    </recommendedName>
</protein>
<name>YCIB_COXB1</name>
<dbReference type="EMBL" id="CP001020">
    <property type="protein sequence ID" value="ACJ20024.1"/>
    <property type="molecule type" value="Genomic_DNA"/>
</dbReference>
<dbReference type="RefSeq" id="WP_005768731.1">
    <property type="nucleotide sequence ID" value="NC_011528.1"/>
</dbReference>
<dbReference type="SMR" id="B6J6X5"/>
<dbReference type="KEGG" id="cbc:CbuK_0771"/>
<dbReference type="HOGENOM" id="CLU_089554_2_0_6"/>
<dbReference type="GO" id="GO:0005886">
    <property type="term" value="C:plasma membrane"/>
    <property type="evidence" value="ECO:0007669"/>
    <property type="project" value="UniProtKB-SubCell"/>
</dbReference>
<dbReference type="HAMAP" id="MF_00189">
    <property type="entry name" value="YciB"/>
    <property type="match status" value="1"/>
</dbReference>
<dbReference type="InterPro" id="IPR006008">
    <property type="entry name" value="YciB"/>
</dbReference>
<dbReference type="NCBIfam" id="TIGR00997">
    <property type="entry name" value="ispZ"/>
    <property type="match status" value="1"/>
</dbReference>
<dbReference type="NCBIfam" id="NF001325">
    <property type="entry name" value="PRK00259.1-3"/>
    <property type="match status" value="1"/>
</dbReference>
<dbReference type="PANTHER" id="PTHR36917:SF1">
    <property type="entry name" value="INNER MEMBRANE-SPANNING PROTEIN YCIB"/>
    <property type="match status" value="1"/>
</dbReference>
<dbReference type="PANTHER" id="PTHR36917">
    <property type="entry name" value="INTRACELLULAR SEPTATION PROTEIN A-RELATED"/>
    <property type="match status" value="1"/>
</dbReference>
<dbReference type="Pfam" id="PF04279">
    <property type="entry name" value="IspA"/>
    <property type="match status" value="1"/>
</dbReference>
<comment type="function">
    <text evidence="1">Plays a role in cell envelope biogenesis, maintenance of cell envelope integrity and membrane homeostasis.</text>
</comment>
<comment type="subcellular location">
    <subcellularLocation>
        <location evidence="1">Cell inner membrane</location>
        <topology evidence="1">Multi-pass membrane protein</topology>
    </subcellularLocation>
</comment>
<comment type="similarity">
    <text evidence="1">Belongs to the YciB family.</text>
</comment>
<keyword id="KW-0997">Cell inner membrane</keyword>
<keyword id="KW-1003">Cell membrane</keyword>
<keyword id="KW-0472">Membrane</keyword>
<keyword id="KW-0812">Transmembrane</keyword>
<keyword id="KW-1133">Transmembrane helix</keyword>
<organism>
    <name type="scientific">Coxiella burnetii (strain CbuK_Q154)</name>
    <name type="common">Coxiella burnetii (strain Q154)</name>
    <dbReference type="NCBI Taxonomy" id="434924"/>
    <lineage>
        <taxon>Bacteria</taxon>
        <taxon>Pseudomonadati</taxon>
        <taxon>Pseudomonadota</taxon>
        <taxon>Gammaproteobacteria</taxon>
        <taxon>Legionellales</taxon>
        <taxon>Coxiellaceae</taxon>
        <taxon>Coxiella</taxon>
    </lineage>
</organism>
<proteinExistence type="inferred from homology"/>
<accession>B6J6X5</accession>
<reference key="1">
    <citation type="journal article" date="2009" name="Infect. Immun.">
        <title>Comparative genomics reveal extensive transposon-mediated genomic plasticity and diversity among potential effector proteins within the genus Coxiella.</title>
        <authorList>
            <person name="Beare P.A."/>
            <person name="Unsworth N."/>
            <person name="Andoh M."/>
            <person name="Voth D.E."/>
            <person name="Omsland A."/>
            <person name="Gilk S.D."/>
            <person name="Williams K.P."/>
            <person name="Sobral B.W."/>
            <person name="Kupko J.J. III"/>
            <person name="Porcella S.F."/>
            <person name="Samuel J.E."/>
            <person name="Heinzen R.A."/>
        </authorList>
    </citation>
    <scope>NUCLEOTIDE SEQUENCE [LARGE SCALE GENOMIC DNA]</scope>
    <source>
        <strain>CbuK_Q154</strain>
    </source>
</reference>
<feature type="chain" id="PRO_1000098876" description="Inner membrane-spanning protein YciB">
    <location>
        <begin position="1"/>
        <end position="181"/>
    </location>
</feature>
<feature type="transmembrane region" description="Helical" evidence="1">
    <location>
        <begin position="8"/>
        <end position="28"/>
    </location>
</feature>
<feature type="transmembrane region" description="Helical" evidence="1">
    <location>
        <begin position="53"/>
        <end position="73"/>
    </location>
</feature>
<feature type="transmembrane region" description="Helical" evidence="1">
    <location>
        <begin position="76"/>
        <end position="96"/>
    </location>
</feature>
<feature type="transmembrane region" description="Helical" evidence="1">
    <location>
        <begin position="121"/>
        <end position="141"/>
    </location>
</feature>
<feature type="transmembrane region" description="Helical" evidence="1">
    <location>
        <begin position="149"/>
        <end position="169"/>
    </location>
</feature>